<sequence length="216" mass="24728">MPIGVPKVPYRIPGDEEATWVDLYNVMYRERTLFLGQEIRCEVTNHITGLMVYLSIEDGISDIFLFINSPGGWLISGMAIFDTMQTVTPDIYTICLGIAASMASFILLGGEPTKRIAFPHARIMLHQPASAYYRARTPEFLLEVEELHKVREMITRVYALRTGKPFWVVSEDMERDVFMSADEAKAYGLVDIVGDEMLDEHCDTDPVWFPEMFKDW</sequence>
<comment type="function">
    <text evidence="1">Cleaves peptides in various proteins in a process that requires ATP hydrolysis. Has a chymotrypsin-like activity. Plays a major role in the degradation of misfolded proteins.</text>
</comment>
<comment type="catalytic activity">
    <reaction evidence="1">
        <text>Hydrolysis of proteins to small peptides in the presence of ATP and magnesium. alpha-casein is the usual test substrate. In the absence of ATP, only oligopeptides shorter than five residues are hydrolyzed (such as succinyl-Leu-Tyr-|-NHMec, and Leu-Tyr-Leu-|-Tyr-Trp, in which cleavage of the -Tyr-|-Leu- and -Tyr-|-Trp bonds also occurs).</text>
        <dbReference type="EC" id="3.4.21.92"/>
    </reaction>
</comment>
<comment type="subunit">
    <text>Component of the chloroplastic Clp protease core complex.</text>
</comment>
<comment type="subcellular location">
    <subcellularLocation>
        <location evidence="1">Plastid</location>
        <location evidence="1">Chloroplast stroma</location>
    </subcellularLocation>
</comment>
<comment type="similarity">
    <text evidence="1">Belongs to the peptidase S14 family.</text>
</comment>
<evidence type="ECO:0000255" key="1">
    <source>
        <dbReference type="HAMAP-Rule" id="MF_00444"/>
    </source>
</evidence>
<evidence type="ECO:0000305" key="2"/>
<protein>
    <recommendedName>
        <fullName evidence="1">ATP-dependent Clp protease proteolytic subunit</fullName>
        <ecNumber evidence="1">3.4.21.92</ecNumber>
    </recommendedName>
    <alternativeName>
        <fullName evidence="1">Endopeptidase Clp</fullName>
    </alternativeName>
</protein>
<keyword id="KW-0150">Chloroplast</keyword>
<keyword id="KW-0378">Hydrolase</keyword>
<keyword id="KW-0934">Plastid</keyword>
<keyword id="KW-0645">Protease</keyword>
<keyword id="KW-1185">Reference proteome</keyword>
<keyword id="KW-0720">Serine protease</keyword>
<proteinExistence type="inferred from homology"/>
<name>CLPP_ORYSJ</name>
<geneLocation type="chloroplast"/>
<accession>P0C314</accession>
<accession>P12209</accession>
<accession>Q6QXZ5</accession>
<accession>Q6QY59</accession>
<dbReference type="EC" id="3.4.21.92" evidence="1"/>
<dbReference type="EMBL" id="X15901">
    <property type="protein sequence ID" value="CAA33972.1"/>
    <property type="molecule type" value="Genomic_DNA"/>
</dbReference>
<dbReference type="EMBL" id="AY522330">
    <property type="protein sequence ID" value="AAS46136.1"/>
    <property type="molecule type" value="Genomic_DNA"/>
</dbReference>
<dbReference type="PIR" id="JQ0251">
    <property type="entry name" value="JQ0251"/>
</dbReference>
<dbReference type="RefSeq" id="NP_039410.1">
    <property type="nucleotide sequence ID" value="NC_001320.1"/>
</dbReference>
<dbReference type="SMR" id="P0C314"/>
<dbReference type="BioGRID" id="792842">
    <property type="interactions" value="1"/>
</dbReference>
<dbReference type="FunCoup" id="P0C314">
    <property type="interactions" value="9"/>
</dbReference>
<dbReference type="STRING" id="39947.P0C314"/>
<dbReference type="MEROPS" id="S14.002"/>
<dbReference type="PaxDb" id="39947-P0C314"/>
<dbReference type="GeneID" id="3131474"/>
<dbReference type="KEGG" id="dosa:CAA33972.1"/>
<dbReference type="KEGG" id="osa:3131474"/>
<dbReference type="InParanoid" id="P0C314"/>
<dbReference type="OrthoDB" id="1875263at2759"/>
<dbReference type="Proteomes" id="UP000059680">
    <property type="component" value="Chloroplast"/>
</dbReference>
<dbReference type="GO" id="GO:0009570">
    <property type="term" value="C:chloroplast stroma"/>
    <property type="evidence" value="ECO:0007669"/>
    <property type="project" value="UniProtKB-SubCell"/>
</dbReference>
<dbReference type="GO" id="GO:0009368">
    <property type="term" value="C:endopeptidase Clp complex"/>
    <property type="evidence" value="ECO:0000318"/>
    <property type="project" value="GO_Central"/>
</dbReference>
<dbReference type="GO" id="GO:0009536">
    <property type="term" value="C:plastid"/>
    <property type="evidence" value="ECO:0000305"/>
    <property type="project" value="Gramene"/>
</dbReference>
<dbReference type="GO" id="GO:0004176">
    <property type="term" value="F:ATP-dependent peptidase activity"/>
    <property type="evidence" value="ECO:0000318"/>
    <property type="project" value="GO_Central"/>
</dbReference>
<dbReference type="GO" id="GO:0051117">
    <property type="term" value="F:ATPase binding"/>
    <property type="evidence" value="ECO:0000318"/>
    <property type="project" value="GO_Central"/>
</dbReference>
<dbReference type="GO" id="GO:0004252">
    <property type="term" value="F:serine-type endopeptidase activity"/>
    <property type="evidence" value="ECO:0000318"/>
    <property type="project" value="GO_Central"/>
</dbReference>
<dbReference type="GO" id="GO:0006515">
    <property type="term" value="P:protein quality control for misfolded or incompletely synthesized proteins"/>
    <property type="evidence" value="ECO:0000318"/>
    <property type="project" value="GO_Central"/>
</dbReference>
<dbReference type="CDD" id="cd07017">
    <property type="entry name" value="S14_ClpP_2"/>
    <property type="match status" value="1"/>
</dbReference>
<dbReference type="FunFam" id="3.90.226.10:FF:000006">
    <property type="entry name" value="ATP-dependent Clp protease proteolytic subunit"/>
    <property type="match status" value="1"/>
</dbReference>
<dbReference type="Gene3D" id="3.90.226.10">
    <property type="entry name" value="2-enoyl-CoA Hydratase, Chain A, domain 1"/>
    <property type="match status" value="1"/>
</dbReference>
<dbReference type="HAMAP" id="MF_00444">
    <property type="entry name" value="ClpP"/>
    <property type="match status" value="1"/>
</dbReference>
<dbReference type="InterPro" id="IPR001907">
    <property type="entry name" value="ClpP"/>
</dbReference>
<dbReference type="InterPro" id="IPR029045">
    <property type="entry name" value="ClpP/crotonase-like_dom_sf"/>
</dbReference>
<dbReference type="InterPro" id="IPR023562">
    <property type="entry name" value="ClpP/TepA"/>
</dbReference>
<dbReference type="InterPro" id="IPR033135">
    <property type="entry name" value="ClpP_His_AS"/>
</dbReference>
<dbReference type="InterPro" id="IPR018215">
    <property type="entry name" value="ClpP_Ser_AS"/>
</dbReference>
<dbReference type="PANTHER" id="PTHR48481">
    <property type="entry name" value="ATP-DEPENDENT CLP PROTEASE PROTEOLYTIC SUBUNIT"/>
    <property type="match status" value="1"/>
</dbReference>
<dbReference type="PANTHER" id="PTHR48481:SF1">
    <property type="entry name" value="ATP-DEPENDENT CLP PROTEASE PROTEOLYTIC SUBUNIT"/>
    <property type="match status" value="1"/>
</dbReference>
<dbReference type="Pfam" id="PF00574">
    <property type="entry name" value="CLP_protease"/>
    <property type="match status" value="1"/>
</dbReference>
<dbReference type="PRINTS" id="PR00127">
    <property type="entry name" value="CLPPROTEASEP"/>
</dbReference>
<dbReference type="SUPFAM" id="SSF52096">
    <property type="entry name" value="ClpP/crotonase"/>
    <property type="match status" value="1"/>
</dbReference>
<dbReference type="PROSITE" id="PS00382">
    <property type="entry name" value="CLP_PROTEASE_HIS"/>
    <property type="match status" value="1"/>
</dbReference>
<dbReference type="PROSITE" id="PS00381">
    <property type="entry name" value="CLP_PROTEASE_SER"/>
    <property type="match status" value="1"/>
</dbReference>
<reference key="1">
    <citation type="journal article" date="1989" name="Mol. Gen. Genet.">
        <title>The complete sequence of the rice (Oryza sativa) chloroplast genome: intermolecular recombination between distinct tRNA genes accounts for a major plastid DNA inversion during the evolution of the cereals.</title>
        <authorList>
            <person name="Hiratsuka J."/>
            <person name="Shimada H."/>
            <person name="Whittier R."/>
            <person name="Ishibashi T."/>
            <person name="Sakamoto M."/>
            <person name="Mori M."/>
            <person name="Kondo C."/>
            <person name="Honji Y."/>
            <person name="Sun C.-R."/>
            <person name="Meng B.-Y."/>
            <person name="Li Y.-Q."/>
            <person name="Kanno A."/>
            <person name="Nishizawa Y."/>
            <person name="Hirai A."/>
            <person name="Shinozaki K."/>
            <person name="Sugiura M."/>
        </authorList>
    </citation>
    <scope>NUCLEOTIDE SEQUENCE [LARGE SCALE GENOMIC DNA]</scope>
    <source>
        <strain>cv. Nipponbare</strain>
    </source>
</reference>
<reference key="2">
    <citation type="journal article" date="2004" name="Plant Physiol.">
        <title>A comparison of rice chloroplast genomes.</title>
        <authorList>
            <person name="Tang J."/>
            <person name="Xia H."/>
            <person name="Cao M."/>
            <person name="Zhang X."/>
            <person name="Zeng W."/>
            <person name="Hu S."/>
            <person name="Tong W."/>
            <person name="Wang J."/>
            <person name="Wang J."/>
            <person name="Yu J."/>
            <person name="Yang H."/>
            <person name="Zhu L."/>
        </authorList>
    </citation>
    <scope>NUCLEOTIDE SEQUENCE [LARGE SCALE GENOMIC DNA]</scope>
    <source>
        <strain>cv. Nipponbare</strain>
    </source>
</reference>
<gene>
    <name evidence="1" type="primary">clpP</name>
    <name type="ordered locus">LOC_Osp1g00590</name>
    <name type="ORF">Nip089</name>
</gene>
<organism>
    <name type="scientific">Oryza sativa subsp. japonica</name>
    <name type="common">Rice</name>
    <dbReference type="NCBI Taxonomy" id="39947"/>
    <lineage>
        <taxon>Eukaryota</taxon>
        <taxon>Viridiplantae</taxon>
        <taxon>Streptophyta</taxon>
        <taxon>Embryophyta</taxon>
        <taxon>Tracheophyta</taxon>
        <taxon>Spermatophyta</taxon>
        <taxon>Magnoliopsida</taxon>
        <taxon>Liliopsida</taxon>
        <taxon>Poales</taxon>
        <taxon>Poaceae</taxon>
        <taxon>BOP clade</taxon>
        <taxon>Oryzoideae</taxon>
        <taxon>Oryzeae</taxon>
        <taxon>Oryzinae</taxon>
        <taxon>Oryza</taxon>
        <taxon>Oryza sativa</taxon>
    </lineage>
</organism>
<feature type="chain" id="PRO_0000288627" description="ATP-dependent Clp protease proteolytic subunit">
    <location>
        <begin position="1"/>
        <end position="216"/>
    </location>
</feature>
<feature type="active site" description="Nucleophile" evidence="1">
    <location>
        <position position="101"/>
    </location>
</feature>
<feature type="active site" evidence="1">
    <location>
        <position position="126"/>
    </location>
</feature>
<feature type="sequence conflict" description="In Ref. 1; CAA33972." evidence="2" ref="1">
    <original>I</original>
    <variation>S</variation>
    <location>
        <position position="60"/>
    </location>
</feature>
<feature type="sequence conflict" description="In Ref. 1; CAA33972." evidence="2" ref="1">
    <original>D</original>
    <variation>N</variation>
    <location>
        <position position="90"/>
    </location>
</feature>
<feature type="sequence conflict" description="In Ref. 1; CAA33972." evidence="2" ref="1">
    <original>I</original>
    <variation>T</variation>
    <location>
        <position position="94"/>
    </location>
</feature>
<feature type="sequence conflict" description="In Ref. 1; CAA33972." evidence="2" ref="1">
    <original>A</original>
    <variation>P</variation>
    <location>
        <position position="103"/>
    </location>
</feature>